<accession>O25544</accession>
<gene>
    <name evidence="1" type="primary">ruvC</name>
    <name type="ordered locus">HP_0877</name>
</gene>
<reference key="1">
    <citation type="journal article" date="1997" name="Nature">
        <title>The complete genome sequence of the gastric pathogen Helicobacter pylori.</title>
        <authorList>
            <person name="Tomb J.-F."/>
            <person name="White O."/>
            <person name="Kerlavage A.R."/>
            <person name="Clayton R.A."/>
            <person name="Sutton G.G."/>
            <person name="Fleischmann R.D."/>
            <person name="Ketchum K.A."/>
            <person name="Klenk H.-P."/>
            <person name="Gill S.R."/>
            <person name="Dougherty B.A."/>
            <person name="Nelson K.E."/>
            <person name="Quackenbush J."/>
            <person name="Zhou L."/>
            <person name="Kirkness E.F."/>
            <person name="Peterson S.N."/>
            <person name="Loftus B.J."/>
            <person name="Richardson D.L."/>
            <person name="Dodson R.J."/>
            <person name="Khalak H.G."/>
            <person name="Glodek A."/>
            <person name="McKenney K."/>
            <person name="FitzGerald L.M."/>
            <person name="Lee N."/>
            <person name="Adams M.D."/>
            <person name="Hickey E.K."/>
            <person name="Berg D.E."/>
            <person name="Gocayne J.D."/>
            <person name="Utterback T.R."/>
            <person name="Peterson J.D."/>
            <person name="Kelley J.M."/>
            <person name="Cotton M.D."/>
            <person name="Weidman J.F."/>
            <person name="Fujii C."/>
            <person name="Bowman C."/>
            <person name="Watthey L."/>
            <person name="Wallin E."/>
            <person name="Hayes W.S."/>
            <person name="Borodovsky M."/>
            <person name="Karp P.D."/>
            <person name="Smith H.O."/>
            <person name="Fraser C.M."/>
            <person name="Venter J.C."/>
        </authorList>
    </citation>
    <scope>NUCLEOTIDE SEQUENCE [LARGE SCALE GENOMIC DNA]</scope>
    <source>
        <strain>ATCC 700392 / 26695</strain>
    </source>
</reference>
<dbReference type="EC" id="3.1.21.10" evidence="1"/>
<dbReference type="EMBL" id="AE000511">
    <property type="protein sequence ID" value="AAD07925.1"/>
    <property type="molecule type" value="Genomic_DNA"/>
</dbReference>
<dbReference type="PIR" id="E64629">
    <property type="entry name" value="E64629"/>
</dbReference>
<dbReference type="RefSeq" id="NP_207671.1">
    <property type="nucleotide sequence ID" value="NC_000915.1"/>
</dbReference>
<dbReference type="RefSeq" id="WP_001221153.1">
    <property type="nucleotide sequence ID" value="NC_018939.1"/>
</dbReference>
<dbReference type="SMR" id="O25544"/>
<dbReference type="FunCoup" id="O25544">
    <property type="interactions" value="142"/>
</dbReference>
<dbReference type="IntAct" id="O25544">
    <property type="interactions" value="4"/>
</dbReference>
<dbReference type="STRING" id="85962.HP_0877"/>
<dbReference type="PaxDb" id="85962-C694_04490"/>
<dbReference type="EnsemblBacteria" id="AAD07925">
    <property type="protein sequence ID" value="AAD07925"/>
    <property type="gene ID" value="HP_0877"/>
</dbReference>
<dbReference type="KEGG" id="heo:C694_04490"/>
<dbReference type="KEGG" id="hpy:HP_0877"/>
<dbReference type="PATRIC" id="fig|85962.47.peg.932"/>
<dbReference type="eggNOG" id="COG0817">
    <property type="taxonomic scope" value="Bacteria"/>
</dbReference>
<dbReference type="InParanoid" id="O25544"/>
<dbReference type="OrthoDB" id="9805499at2"/>
<dbReference type="PhylomeDB" id="O25544"/>
<dbReference type="Proteomes" id="UP000000429">
    <property type="component" value="Chromosome"/>
</dbReference>
<dbReference type="GO" id="GO:0005737">
    <property type="term" value="C:cytoplasm"/>
    <property type="evidence" value="ECO:0007669"/>
    <property type="project" value="UniProtKB-SubCell"/>
</dbReference>
<dbReference type="GO" id="GO:0048476">
    <property type="term" value="C:Holliday junction resolvase complex"/>
    <property type="evidence" value="ECO:0007669"/>
    <property type="project" value="UniProtKB-UniRule"/>
</dbReference>
<dbReference type="GO" id="GO:0008821">
    <property type="term" value="F:crossover junction DNA endonuclease activity"/>
    <property type="evidence" value="ECO:0007669"/>
    <property type="project" value="UniProtKB-UniRule"/>
</dbReference>
<dbReference type="GO" id="GO:0003677">
    <property type="term" value="F:DNA binding"/>
    <property type="evidence" value="ECO:0007669"/>
    <property type="project" value="UniProtKB-KW"/>
</dbReference>
<dbReference type="GO" id="GO:0000287">
    <property type="term" value="F:magnesium ion binding"/>
    <property type="evidence" value="ECO:0007669"/>
    <property type="project" value="UniProtKB-UniRule"/>
</dbReference>
<dbReference type="GO" id="GO:0006310">
    <property type="term" value="P:DNA recombination"/>
    <property type="evidence" value="ECO:0007669"/>
    <property type="project" value="UniProtKB-UniRule"/>
</dbReference>
<dbReference type="GO" id="GO:0006281">
    <property type="term" value="P:DNA repair"/>
    <property type="evidence" value="ECO:0007669"/>
    <property type="project" value="UniProtKB-UniRule"/>
</dbReference>
<dbReference type="CDD" id="cd16962">
    <property type="entry name" value="RuvC"/>
    <property type="match status" value="1"/>
</dbReference>
<dbReference type="FunFam" id="3.30.420.10:FF:000002">
    <property type="entry name" value="Crossover junction endodeoxyribonuclease RuvC"/>
    <property type="match status" value="1"/>
</dbReference>
<dbReference type="Gene3D" id="3.30.420.10">
    <property type="entry name" value="Ribonuclease H-like superfamily/Ribonuclease H"/>
    <property type="match status" value="1"/>
</dbReference>
<dbReference type="HAMAP" id="MF_00034">
    <property type="entry name" value="RuvC"/>
    <property type="match status" value="1"/>
</dbReference>
<dbReference type="InterPro" id="IPR012337">
    <property type="entry name" value="RNaseH-like_sf"/>
</dbReference>
<dbReference type="InterPro" id="IPR036397">
    <property type="entry name" value="RNaseH_sf"/>
</dbReference>
<dbReference type="InterPro" id="IPR020563">
    <property type="entry name" value="X-over_junc_endoDNase_Mg_BS"/>
</dbReference>
<dbReference type="InterPro" id="IPR002176">
    <property type="entry name" value="X-over_junc_endoDNase_RuvC"/>
</dbReference>
<dbReference type="NCBIfam" id="TIGR00228">
    <property type="entry name" value="ruvC"/>
    <property type="match status" value="1"/>
</dbReference>
<dbReference type="PANTHER" id="PTHR30194">
    <property type="entry name" value="CROSSOVER JUNCTION ENDODEOXYRIBONUCLEASE RUVC"/>
    <property type="match status" value="1"/>
</dbReference>
<dbReference type="PANTHER" id="PTHR30194:SF3">
    <property type="entry name" value="CROSSOVER JUNCTION ENDODEOXYRIBONUCLEASE RUVC"/>
    <property type="match status" value="1"/>
</dbReference>
<dbReference type="Pfam" id="PF02075">
    <property type="entry name" value="RuvC"/>
    <property type="match status" value="1"/>
</dbReference>
<dbReference type="PRINTS" id="PR00696">
    <property type="entry name" value="RSOLVASERUVC"/>
</dbReference>
<dbReference type="SUPFAM" id="SSF53098">
    <property type="entry name" value="Ribonuclease H-like"/>
    <property type="match status" value="1"/>
</dbReference>
<dbReference type="PROSITE" id="PS01321">
    <property type="entry name" value="RUVC"/>
    <property type="match status" value="1"/>
</dbReference>
<proteinExistence type="evidence at protein level"/>
<keyword id="KW-0963">Cytoplasm</keyword>
<keyword id="KW-0227">DNA damage</keyword>
<keyword id="KW-0233">DNA recombination</keyword>
<keyword id="KW-0234">DNA repair</keyword>
<keyword id="KW-0238">DNA-binding</keyword>
<keyword id="KW-0255">Endonuclease</keyword>
<keyword id="KW-0378">Hydrolase</keyword>
<keyword id="KW-0460">Magnesium</keyword>
<keyword id="KW-0479">Metal-binding</keyword>
<keyword id="KW-0540">Nuclease</keyword>
<keyword id="KW-1185">Reference proteome</keyword>
<organism>
    <name type="scientific">Helicobacter pylori (strain ATCC 700392 / 26695)</name>
    <name type="common">Campylobacter pylori</name>
    <dbReference type="NCBI Taxonomy" id="85962"/>
    <lineage>
        <taxon>Bacteria</taxon>
        <taxon>Pseudomonadati</taxon>
        <taxon>Campylobacterota</taxon>
        <taxon>Epsilonproteobacteria</taxon>
        <taxon>Campylobacterales</taxon>
        <taxon>Helicobacteraceae</taxon>
        <taxon>Helicobacter</taxon>
    </lineage>
</organism>
<sequence>MRILGIDPGSRKCGYAIISHASNKLSLITAGFINITTTRLQEQILDLIEALDCLLDRYEVNEVAIEDIFFGYNPKSVIKLAQFRGALSLKILERIGNFSEYTPLQVKKALTGNGKAAKEQVAFMVKRLLNITSEIKPLDISDAIAVAITHAQRLKLH</sequence>
<name>RUVC_HELPY</name>
<evidence type="ECO:0000255" key="1">
    <source>
        <dbReference type="HAMAP-Rule" id="MF_00034"/>
    </source>
</evidence>
<evidence type="ECO:0000305" key="2"/>
<comment type="function">
    <text evidence="1">The RuvA-RuvB-RuvC complex processes Holliday junction (HJ) DNA during genetic recombination and DNA repair. Endonuclease that resolves HJ intermediates. Cleaves cruciform DNA by making single-stranded nicks across the HJ at symmetrical positions within the homologous arms, yielding a 5'-phosphate and a 3'-hydroxyl group; requires a central core of homology in the junction. The consensus cleavage sequence is 5'-(A/T)TT(C/G)-3'. Cleavage occurs on the 3'-side of the TT dinucleotide at the point of strand exchange. HJ branch migration catalyzed by RuvA-RuvB allows RuvC to scan DNA until it finds its consensus sequence, where it cleaves and resolves the cruciform DNA.</text>
</comment>
<comment type="catalytic activity">
    <reaction evidence="1">
        <text>Endonucleolytic cleavage at a junction such as a reciprocal single-stranded crossover between two homologous DNA duplexes (Holliday junction).</text>
        <dbReference type="EC" id="3.1.21.10"/>
    </reaction>
</comment>
<comment type="cofactor">
    <cofactor evidence="1">
        <name>Mg(2+)</name>
        <dbReference type="ChEBI" id="CHEBI:18420"/>
    </cofactor>
    <text evidence="1">Binds 2 Mg(2+) ion per subunit.</text>
</comment>
<comment type="subunit">
    <text evidence="1">Homodimer which binds Holliday junction (HJ) DNA. The HJ becomes 2-fold symmetrical on binding to RuvC with unstacked arms; it has a different conformation from HJ DNA in complex with RuvA. In the full resolvosome a probable DNA-RuvA(4)-RuvB(12)-RuvC(2) complex forms which resolves the HJ.</text>
</comment>
<comment type="interaction">
    <interactant intactId="EBI-9261745">
        <id>O25544</id>
    </interactant>
    <interactant intactId="EBI-7513643">
        <id>O25404</id>
        <label>HP_0697</label>
    </interactant>
    <organismsDiffer>false</organismsDiffer>
    <experiments>3</experiments>
</comment>
<comment type="subcellular location">
    <subcellularLocation>
        <location evidence="1">Cytoplasm</location>
    </subcellularLocation>
</comment>
<comment type="similarity">
    <text evidence="1 2">Belongs to the RuvC family.</text>
</comment>
<feature type="chain" id="PRO_0000183105" description="Crossover junction endodeoxyribonuclease RuvC">
    <location>
        <begin position="1"/>
        <end position="157"/>
    </location>
</feature>
<feature type="active site" evidence="1">
    <location>
        <position position="7"/>
    </location>
</feature>
<feature type="active site" evidence="1">
    <location>
        <position position="66"/>
    </location>
</feature>
<feature type="active site" evidence="1">
    <location>
        <position position="139"/>
    </location>
</feature>
<feature type="binding site" evidence="1">
    <location>
        <position position="7"/>
    </location>
    <ligand>
        <name>Mg(2+)</name>
        <dbReference type="ChEBI" id="CHEBI:18420"/>
        <label>1</label>
    </ligand>
</feature>
<feature type="binding site" evidence="1">
    <location>
        <position position="66"/>
    </location>
    <ligand>
        <name>Mg(2+)</name>
        <dbReference type="ChEBI" id="CHEBI:18420"/>
        <label>2</label>
    </ligand>
</feature>
<feature type="binding site" evidence="1">
    <location>
        <position position="139"/>
    </location>
    <ligand>
        <name>Mg(2+)</name>
        <dbReference type="ChEBI" id="CHEBI:18420"/>
        <label>1</label>
    </ligand>
</feature>
<protein>
    <recommendedName>
        <fullName evidence="1">Crossover junction endodeoxyribonuclease RuvC</fullName>
        <ecNumber evidence="1">3.1.21.10</ecNumber>
    </recommendedName>
    <alternativeName>
        <fullName evidence="1">Holliday junction nuclease RuvC</fullName>
    </alternativeName>
    <alternativeName>
        <fullName evidence="1">Holliday junction resolvase RuvC</fullName>
    </alternativeName>
</protein>